<accession>P0A348</accession>
<accession>O50322</accession>
<protein>
    <recommendedName>
        <fullName evidence="2">Co-chaperonin GroES</fullName>
    </recommendedName>
    <alternativeName>
        <fullName evidence="2">10 kDa chaperonin</fullName>
    </alternativeName>
    <alternativeName>
        <fullName evidence="2">Chaperonin-10</fullName>
        <shortName evidence="2">Cpn10</shortName>
    </alternativeName>
</protein>
<feature type="initiator methionine" description="Removed" evidence="1">
    <location>
        <position position="1"/>
    </location>
</feature>
<feature type="chain" id="PRO_0000174879" description="Co-chaperonin GroES">
    <location>
        <begin position="2"/>
        <end position="103"/>
    </location>
</feature>
<reference key="1">
    <citation type="journal article" date="1997" name="Biochim. Biophys. Acta">
        <title>Cloning, characterization and functional analysis of groESL operon from thermophilic cyanobacterium Synechococcus vulcanus.</title>
        <authorList>
            <person name="Tanaka N."/>
            <person name="Hiyama T."/>
            <person name="Nakamoto H."/>
        </authorList>
    </citation>
    <scope>NUCLEOTIDE SEQUENCE [GENOMIC DNA]</scope>
</reference>
<name>CH10_THEVL</name>
<sequence>MAAVSLSVSTVKPLGDRIFVKVAESEERTAGGILLPDNAREKPQVGEVTAVGPGKLTEDGKRQPMDVKVGDKVLYSKYAGTEVKLAGEDYVLLSEKDILAIVG</sequence>
<evidence type="ECO:0000250" key="1"/>
<evidence type="ECO:0000255" key="2">
    <source>
        <dbReference type="HAMAP-Rule" id="MF_00580"/>
    </source>
</evidence>
<evidence type="ECO:0000305" key="3"/>
<comment type="function">
    <text evidence="2">Together with the chaperonin GroEL, plays an essential role in assisting protein folding. The GroEL-GroES system forms a nano-cage that allows encapsulation of the non-native substrate proteins and provides a physical environment optimized to promote and accelerate protein folding. GroES binds to the apical surface of the GroEL ring, thereby capping the opening of the GroEL channel.</text>
</comment>
<comment type="subunit">
    <text evidence="2">Heptamer of 7 subunits arranged in a ring. Interacts with the chaperonin GroEL.</text>
</comment>
<comment type="subcellular location">
    <subcellularLocation>
        <location evidence="2">Cytoplasm</location>
    </subcellularLocation>
</comment>
<comment type="similarity">
    <text evidence="2 3">Belongs to the GroES chaperonin family.</text>
</comment>
<gene>
    <name evidence="2" type="primary">groES</name>
    <name evidence="2" type="synonym">groS</name>
</gene>
<proteinExistence type="inferred from homology"/>
<dbReference type="EMBL" id="D78139">
    <property type="protein sequence ID" value="BAA23816.1"/>
    <property type="molecule type" value="Genomic_DNA"/>
</dbReference>
<dbReference type="SMR" id="P0A348"/>
<dbReference type="GO" id="GO:0005737">
    <property type="term" value="C:cytoplasm"/>
    <property type="evidence" value="ECO:0007669"/>
    <property type="project" value="UniProtKB-SubCell"/>
</dbReference>
<dbReference type="GO" id="GO:0005524">
    <property type="term" value="F:ATP binding"/>
    <property type="evidence" value="ECO:0007669"/>
    <property type="project" value="InterPro"/>
</dbReference>
<dbReference type="GO" id="GO:0046872">
    <property type="term" value="F:metal ion binding"/>
    <property type="evidence" value="ECO:0007669"/>
    <property type="project" value="TreeGrafter"/>
</dbReference>
<dbReference type="GO" id="GO:0044183">
    <property type="term" value="F:protein folding chaperone"/>
    <property type="evidence" value="ECO:0007669"/>
    <property type="project" value="InterPro"/>
</dbReference>
<dbReference type="GO" id="GO:0051087">
    <property type="term" value="F:protein-folding chaperone binding"/>
    <property type="evidence" value="ECO:0007669"/>
    <property type="project" value="TreeGrafter"/>
</dbReference>
<dbReference type="GO" id="GO:0051082">
    <property type="term" value="F:unfolded protein binding"/>
    <property type="evidence" value="ECO:0007669"/>
    <property type="project" value="TreeGrafter"/>
</dbReference>
<dbReference type="GO" id="GO:0051085">
    <property type="term" value="P:chaperone cofactor-dependent protein refolding"/>
    <property type="evidence" value="ECO:0007669"/>
    <property type="project" value="TreeGrafter"/>
</dbReference>
<dbReference type="CDD" id="cd00320">
    <property type="entry name" value="cpn10"/>
    <property type="match status" value="1"/>
</dbReference>
<dbReference type="FunFam" id="2.30.33.40:FF:000001">
    <property type="entry name" value="10 kDa chaperonin"/>
    <property type="match status" value="1"/>
</dbReference>
<dbReference type="Gene3D" id="2.30.33.40">
    <property type="entry name" value="GroES chaperonin"/>
    <property type="match status" value="1"/>
</dbReference>
<dbReference type="HAMAP" id="MF_00580">
    <property type="entry name" value="CH10"/>
    <property type="match status" value="1"/>
</dbReference>
<dbReference type="InterPro" id="IPR020818">
    <property type="entry name" value="Chaperonin_GroES"/>
</dbReference>
<dbReference type="InterPro" id="IPR037124">
    <property type="entry name" value="Chaperonin_GroES_sf"/>
</dbReference>
<dbReference type="InterPro" id="IPR018369">
    <property type="entry name" value="Chaprnonin_Cpn10_CS"/>
</dbReference>
<dbReference type="InterPro" id="IPR011032">
    <property type="entry name" value="GroES-like_sf"/>
</dbReference>
<dbReference type="NCBIfam" id="NF001527">
    <property type="entry name" value="PRK00364.1-2"/>
    <property type="match status" value="1"/>
</dbReference>
<dbReference type="NCBIfam" id="NF001530">
    <property type="entry name" value="PRK00364.1-6"/>
    <property type="match status" value="1"/>
</dbReference>
<dbReference type="NCBIfam" id="NF001531">
    <property type="entry name" value="PRK00364.2-2"/>
    <property type="match status" value="1"/>
</dbReference>
<dbReference type="NCBIfam" id="NF001533">
    <property type="entry name" value="PRK00364.2-4"/>
    <property type="match status" value="1"/>
</dbReference>
<dbReference type="NCBIfam" id="NF001534">
    <property type="entry name" value="PRK00364.2-5"/>
    <property type="match status" value="1"/>
</dbReference>
<dbReference type="PANTHER" id="PTHR10772">
    <property type="entry name" value="10 KDA HEAT SHOCK PROTEIN"/>
    <property type="match status" value="1"/>
</dbReference>
<dbReference type="PANTHER" id="PTHR10772:SF58">
    <property type="entry name" value="CO-CHAPERONIN GROES"/>
    <property type="match status" value="1"/>
</dbReference>
<dbReference type="Pfam" id="PF00166">
    <property type="entry name" value="Cpn10"/>
    <property type="match status" value="1"/>
</dbReference>
<dbReference type="PRINTS" id="PR00297">
    <property type="entry name" value="CHAPERONIN10"/>
</dbReference>
<dbReference type="SMART" id="SM00883">
    <property type="entry name" value="Cpn10"/>
    <property type="match status" value="1"/>
</dbReference>
<dbReference type="SUPFAM" id="SSF50129">
    <property type="entry name" value="GroES-like"/>
    <property type="match status" value="1"/>
</dbReference>
<dbReference type="PROSITE" id="PS00681">
    <property type="entry name" value="CHAPERONINS_CPN10"/>
    <property type="match status" value="1"/>
</dbReference>
<keyword id="KW-0143">Chaperone</keyword>
<keyword id="KW-0963">Cytoplasm</keyword>
<organism>
    <name type="scientific">Thermostichus vulcanus</name>
    <name type="common">Synechococcus vulcanus</name>
    <dbReference type="NCBI Taxonomy" id="32053"/>
    <lineage>
        <taxon>Bacteria</taxon>
        <taxon>Bacillati</taxon>
        <taxon>Cyanobacteriota</taxon>
        <taxon>Cyanophyceae</taxon>
        <taxon>Thermostichales</taxon>
        <taxon>Thermostichaceae</taxon>
        <taxon>Thermostichus</taxon>
    </lineage>
</organism>